<proteinExistence type="inferred from homology"/>
<protein>
    <recommendedName>
        <fullName>Serotransferrin</fullName>
    </recommendedName>
</protein>
<reference key="1">
    <citation type="journal article" date="1996" name="Mol. Mar. Biol. Biotechnol.">
        <title>Structure of medaka transferrin gene and its 5'-flanking region.</title>
        <authorList>
            <person name="Mikawa N."/>
            <person name="Hirono I."/>
            <person name="Aoki T."/>
        </authorList>
    </citation>
    <scope>NUCLEOTIDE SEQUENCE [GENOMIC DNA]</scope>
</reference>
<accession>P79819</accession>
<sequence>MKPLLLLTLLGCLAAALAVPAQKVKWCVKSDQEFRKCSDLAAASPAFSCVKKESTLDCIIAIKAGEADAITVDGGDVYTAGLNNYDLHPIIAEDYGTSSETCYYAVAVAKKGTTFGIRDLRGKKSCHTGLGKSAGWNIPIGTLVSMDIIQWAGVEDKPVEEEVSTFFQASCVPGATRGSKLCELCKGDCSRSQKEPYYDYNGAFNCLAEGAGDVAFVKHLTVPDQEKSKYELLCRDNTRAPIDDYKKCNLARVPAHAIVTHKDPQLAELIWTSLNSVQNFNLFSSEAYAPSKNLMFKDSTQRLVKLPQNTDSFLYLGAQYMSIVRSLKKEQSVGTNSNAIKWCAVGHAETAKCDTWSINSVTDDTAAIECQNAPSVEECLKKIMRKEADAMAVDGGEVYTAGKCGLVPAMVEQYDAELCSSSGGQASSYYAVAVVKKDSGVTWENLKGKKSCHTGIGRTAGWNIPMGRIYDQTKDCDFTKFFPSGCAPEPKPALHCALCVKAAAKLSGDEAKCKARPEEQYYGYAGAFRCLAEGAGDVAFIKHTIVGENTDGNGPDWARSLKSDDYQLICPGKGPVPISEYASCNLAVVPAHAVVTRPESRSDVVRVLQVQQTFFGASGSDPSFKLFQSQNGNNLLFKDSTKCLQEVPAGTSYDQFLGSGYMEAMTSLRKCSDTASDLEKSCTFHSCQQT</sequence>
<keyword id="KW-1015">Disulfide bond</keyword>
<keyword id="KW-0406">Ion transport</keyword>
<keyword id="KW-0408">Iron</keyword>
<keyword id="KW-0410">Iron transport</keyword>
<keyword id="KW-0479">Metal-binding</keyword>
<keyword id="KW-1185">Reference proteome</keyword>
<keyword id="KW-0677">Repeat</keyword>
<keyword id="KW-0964">Secreted</keyword>
<keyword id="KW-0732">Signal</keyword>
<keyword id="KW-0813">Transport</keyword>
<feature type="signal peptide" evidence="1">
    <location>
        <begin position="1"/>
        <end position="17"/>
    </location>
</feature>
<feature type="chain" id="PRO_0000035722" description="Serotransferrin">
    <location>
        <begin position="18"/>
        <end position="690"/>
    </location>
</feature>
<feature type="domain" description="Transferrin-like 1" evidence="3">
    <location>
        <begin position="24"/>
        <end position="329"/>
    </location>
</feature>
<feature type="domain" description="Transferrin-like 2" evidence="3">
    <location>
        <begin position="340"/>
        <end position="670"/>
    </location>
</feature>
<feature type="binding site" evidence="3">
    <location>
        <position position="73"/>
    </location>
    <ligand>
        <name>Fe(3+)</name>
        <dbReference type="ChEBI" id="CHEBI:29034"/>
        <label>1</label>
    </ligand>
</feature>
<feature type="binding site" evidence="3">
    <location>
        <position position="103"/>
    </location>
    <ligand>
        <name>Fe(3+)</name>
        <dbReference type="ChEBI" id="CHEBI:29034"/>
        <label>1</label>
    </ligand>
</feature>
<feature type="binding site" evidence="3">
    <location>
        <position position="128"/>
    </location>
    <ligand>
        <name>hydrogencarbonate</name>
        <dbReference type="ChEBI" id="CHEBI:17544"/>
        <label>1</label>
    </ligand>
</feature>
<feature type="binding site" evidence="3">
    <location>
        <position position="132"/>
    </location>
    <ligand>
        <name>hydrogencarbonate</name>
        <dbReference type="ChEBI" id="CHEBI:17544"/>
        <label>1</label>
    </ligand>
</feature>
<feature type="binding site" evidence="3">
    <location>
        <position position="134"/>
    </location>
    <ligand>
        <name>hydrogencarbonate</name>
        <dbReference type="ChEBI" id="CHEBI:17544"/>
        <label>1</label>
    </ligand>
</feature>
<feature type="binding site" evidence="3">
    <location>
        <position position="135"/>
    </location>
    <ligand>
        <name>hydrogencarbonate</name>
        <dbReference type="ChEBI" id="CHEBI:17544"/>
        <label>1</label>
    </ligand>
</feature>
<feature type="binding site" evidence="3">
    <location>
        <position position="200"/>
    </location>
    <ligand>
        <name>Fe(3+)</name>
        <dbReference type="ChEBI" id="CHEBI:29034"/>
        <label>1</label>
    </ligand>
</feature>
<feature type="binding site" evidence="3">
    <location>
        <position position="256"/>
    </location>
    <ligand>
        <name>Fe(3+)</name>
        <dbReference type="ChEBI" id="CHEBI:29034"/>
        <label>1</label>
    </ligand>
</feature>
<feature type="binding site" evidence="3">
    <location>
        <position position="394"/>
    </location>
    <ligand>
        <name>Fe(3+)</name>
        <dbReference type="ChEBI" id="CHEBI:29034"/>
        <label>2</label>
    </ligand>
</feature>
<feature type="binding site" evidence="3">
    <location>
        <position position="429"/>
    </location>
    <ligand>
        <name>Fe(3+)</name>
        <dbReference type="ChEBI" id="CHEBI:29034"/>
        <label>2</label>
    </ligand>
</feature>
<feature type="binding site" evidence="3">
    <location>
        <position position="454"/>
    </location>
    <ligand>
        <name>hydrogencarbonate</name>
        <dbReference type="ChEBI" id="CHEBI:17544"/>
        <label>2</label>
    </ligand>
</feature>
<feature type="binding site" evidence="3">
    <location>
        <position position="458"/>
    </location>
    <ligand>
        <name>hydrogencarbonate</name>
        <dbReference type="ChEBI" id="CHEBI:17544"/>
        <label>2</label>
    </ligand>
</feature>
<feature type="binding site" evidence="3">
    <location>
        <position position="460"/>
    </location>
    <ligand>
        <name>hydrogencarbonate</name>
        <dbReference type="ChEBI" id="CHEBI:17544"/>
        <label>2</label>
    </ligand>
</feature>
<feature type="binding site" evidence="3">
    <location>
        <position position="461"/>
    </location>
    <ligand>
        <name>hydrogencarbonate</name>
        <dbReference type="ChEBI" id="CHEBI:17544"/>
        <label>2</label>
    </ligand>
</feature>
<feature type="binding site" evidence="3">
    <location>
        <position position="524"/>
    </location>
    <ligand>
        <name>Fe(3+)</name>
        <dbReference type="ChEBI" id="CHEBI:29034"/>
        <label>2</label>
    </ligand>
</feature>
<feature type="binding site" evidence="3">
    <location>
        <position position="592"/>
    </location>
    <ligand>
        <name>Fe(3+)</name>
        <dbReference type="ChEBI" id="CHEBI:29034"/>
        <label>2</label>
    </ligand>
</feature>
<feature type="disulfide bond" evidence="3">
    <location>
        <begin position="27"/>
        <end position="49"/>
    </location>
</feature>
<feature type="disulfide bond" evidence="3">
    <location>
        <begin position="126"/>
        <end position="206"/>
    </location>
</feature>
<feature type="disulfide bond" evidence="3">
    <location>
        <begin position="171"/>
        <end position="185"/>
    </location>
</feature>
<feature type="disulfide bond" evidence="3">
    <location>
        <begin position="234"/>
        <end position="248"/>
    </location>
</feature>
<feature type="disulfide bond" evidence="3">
    <location>
        <begin position="343"/>
        <end position="379"/>
    </location>
</feature>
<feature type="disulfide bond" evidence="3">
    <location>
        <begin position="353"/>
        <end position="370"/>
    </location>
</feature>
<feature type="disulfide bond" evidence="3">
    <location>
        <begin position="404"/>
        <end position="682"/>
    </location>
</feature>
<feature type="disulfide bond" evidence="3">
    <location>
        <begin position="419"/>
        <end position="643"/>
    </location>
</feature>
<feature type="disulfide bond" evidence="3">
    <location>
        <begin position="452"/>
        <end position="530"/>
    </location>
</feature>
<feature type="disulfide bond" evidence="3">
    <location>
        <begin position="476"/>
        <end position="671"/>
    </location>
</feature>
<feature type="disulfide bond" evidence="3">
    <location>
        <begin position="486"/>
        <end position="499"/>
    </location>
</feature>
<feature type="disulfide bond" evidence="3">
    <location>
        <begin position="496"/>
        <end position="513"/>
    </location>
</feature>
<feature type="disulfide bond" evidence="3">
    <location>
        <begin position="570"/>
        <end position="584"/>
    </location>
</feature>
<gene>
    <name type="primary">tf</name>
</gene>
<organism>
    <name type="scientific">Oryzias latipes</name>
    <name type="common">Japanese rice fish</name>
    <name type="synonym">Japanese killifish</name>
    <dbReference type="NCBI Taxonomy" id="8090"/>
    <lineage>
        <taxon>Eukaryota</taxon>
        <taxon>Metazoa</taxon>
        <taxon>Chordata</taxon>
        <taxon>Craniata</taxon>
        <taxon>Vertebrata</taxon>
        <taxon>Euteleostomi</taxon>
        <taxon>Actinopterygii</taxon>
        <taxon>Neopterygii</taxon>
        <taxon>Teleostei</taxon>
        <taxon>Neoteleostei</taxon>
        <taxon>Acanthomorphata</taxon>
        <taxon>Ovalentaria</taxon>
        <taxon>Atherinomorphae</taxon>
        <taxon>Beloniformes</taxon>
        <taxon>Adrianichthyidae</taxon>
        <taxon>Oryziinae</taxon>
        <taxon>Oryzias</taxon>
    </lineage>
</organism>
<dbReference type="EMBL" id="D64033">
    <property type="protein sequence ID" value="BAA10901.1"/>
    <property type="molecule type" value="Genomic_DNA"/>
</dbReference>
<dbReference type="SMR" id="P79819"/>
<dbReference type="STRING" id="8090.ENSORLP00000044975"/>
<dbReference type="MEROPS" id="S60.970"/>
<dbReference type="eggNOG" id="ENOG502QT0C">
    <property type="taxonomic scope" value="Eukaryota"/>
</dbReference>
<dbReference type="InParanoid" id="P79819"/>
<dbReference type="Proteomes" id="UP000001038">
    <property type="component" value="Unplaced"/>
</dbReference>
<dbReference type="Proteomes" id="UP000265180">
    <property type="component" value="Chromosome 9"/>
</dbReference>
<dbReference type="Proteomes" id="UP000265200">
    <property type="component" value="Chromosome 9"/>
</dbReference>
<dbReference type="GO" id="GO:0005769">
    <property type="term" value="C:early endosome"/>
    <property type="evidence" value="ECO:0000318"/>
    <property type="project" value="GO_Central"/>
</dbReference>
<dbReference type="GO" id="GO:0005615">
    <property type="term" value="C:extracellular space"/>
    <property type="evidence" value="ECO:0000318"/>
    <property type="project" value="GO_Central"/>
</dbReference>
<dbReference type="GO" id="GO:0005886">
    <property type="term" value="C:plasma membrane"/>
    <property type="evidence" value="ECO:0000318"/>
    <property type="project" value="GO_Central"/>
</dbReference>
<dbReference type="GO" id="GO:0055037">
    <property type="term" value="C:recycling endosome"/>
    <property type="evidence" value="ECO:0000318"/>
    <property type="project" value="GO_Central"/>
</dbReference>
<dbReference type="GO" id="GO:0046872">
    <property type="term" value="F:metal ion binding"/>
    <property type="evidence" value="ECO:0007669"/>
    <property type="project" value="UniProtKB-KW"/>
</dbReference>
<dbReference type="GO" id="GO:0019731">
    <property type="term" value="P:antibacterial humoral response"/>
    <property type="evidence" value="ECO:0000318"/>
    <property type="project" value="GO_Central"/>
</dbReference>
<dbReference type="GO" id="GO:0006826">
    <property type="term" value="P:iron ion transport"/>
    <property type="evidence" value="ECO:0000318"/>
    <property type="project" value="GO_Central"/>
</dbReference>
<dbReference type="FunFam" id="3.40.190.10:FF:000095">
    <property type="entry name" value="Lactotransferrin"/>
    <property type="match status" value="2"/>
</dbReference>
<dbReference type="Gene3D" id="3.40.190.10">
    <property type="entry name" value="Periplasmic binding protein-like II"/>
    <property type="match status" value="4"/>
</dbReference>
<dbReference type="InterPro" id="IPR016357">
    <property type="entry name" value="Transferrin"/>
</dbReference>
<dbReference type="InterPro" id="IPR001156">
    <property type="entry name" value="Transferrin-like_dom"/>
</dbReference>
<dbReference type="InterPro" id="IPR018195">
    <property type="entry name" value="Transferrin_Fe_BS"/>
</dbReference>
<dbReference type="PANTHER" id="PTHR11485:SF31">
    <property type="entry name" value="SEROTRANSFERRIN"/>
    <property type="match status" value="1"/>
</dbReference>
<dbReference type="PANTHER" id="PTHR11485">
    <property type="entry name" value="TRANSFERRIN"/>
    <property type="match status" value="1"/>
</dbReference>
<dbReference type="Pfam" id="PF00405">
    <property type="entry name" value="Transferrin"/>
    <property type="match status" value="2"/>
</dbReference>
<dbReference type="PIRSF" id="PIRSF002549">
    <property type="entry name" value="Transferrin"/>
    <property type="match status" value="1"/>
</dbReference>
<dbReference type="PRINTS" id="PR00422">
    <property type="entry name" value="TRANSFERRIN"/>
</dbReference>
<dbReference type="SMART" id="SM00094">
    <property type="entry name" value="TR_FER"/>
    <property type="match status" value="2"/>
</dbReference>
<dbReference type="SUPFAM" id="SSF53850">
    <property type="entry name" value="Periplasmic binding protein-like II"/>
    <property type="match status" value="2"/>
</dbReference>
<dbReference type="PROSITE" id="PS00205">
    <property type="entry name" value="TRANSFERRIN_LIKE_1"/>
    <property type="match status" value="2"/>
</dbReference>
<dbReference type="PROSITE" id="PS00206">
    <property type="entry name" value="TRANSFERRIN_LIKE_2"/>
    <property type="match status" value="2"/>
</dbReference>
<dbReference type="PROSITE" id="PS00207">
    <property type="entry name" value="TRANSFERRIN_LIKE_3"/>
    <property type="match status" value="1"/>
</dbReference>
<dbReference type="PROSITE" id="PS51408">
    <property type="entry name" value="TRANSFERRIN_LIKE_4"/>
    <property type="match status" value="2"/>
</dbReference>
<name>TRFE_ORYLA</name>
<comment type="function">
    <text>Transferrins are iron binding transport proteins which can bind two Fe(3+) ions in association with the binding of an anion, usually bicarbonate.</text>
</comment>
<comment type="subunit">
    <text evidence="2">Monomer.</text>
</comment>
<comment type="subcellular location">
    <subcellularLocation>
        <location>Secreted</location>
    </subcellularLocation>
</comment>
<comment type="similarity">
    <text evidence="3">Belongs to the transferrin family.</text>
</comment>
<evidence type="ECO:0000250" key="1"/>
<evidence type="ECO:0000250" key="2">
    <source>
        <dbReference type="UniProtKB" id="P02787"/>
    </source>
</evidence>
<evidence type="ECO:0000255" key="3">
    <source>
        <dbReference type="PROSITE-ProRule" id="PRU00741"/>
    </source>
</evidence>